<dbReference type="EMBL" id="CP001283">
    <property type="protein sequence ID" value="ACK90670.1"/>
    <property type="molecule type" value="Genomic_DNA"/>
</dbReference>
<dbReference type="RefSeq" id="WP_000928969.1">
    <property type="nucleotide sequence ID" value="NC_011773.1"/>
</dbReference>
<dbReference type="SMR" id="B7JKC6"/>
<dbReference type="GeneID" id="93010936"/>
<dbReference type="KEGG" id="bcu:BCAH820_0129"/>
<dbReference type="HOGENOM" id="CLU_078858_2_1_9"/>
<dbReference type="Proteomes" id="UP000001363">
    <property type="component" value="Chromosome"/>
</dbReference>
<dbReference type="GO" id="GO:0022625">
    <property type="term" value="C:cytosolic large ribosomal subunit"/>
    <property type="evidence" value="ECO:0007669"/>
    <property type="project" value="TreeGrafter"/>
</dbReference>
<dbReference type="GO" id="GO:0019843">
    <property type="term" value="F:rRNA binding"/>
    <property type="evidence" value="ECO:0007669"/>
    <property type="project" value="UniProtKB-UniRule"/>
</dbReference>
<dbReference type="GO" id="GO:0003735">
    <property type="term" value="F:structural constituent of ribosome"/>
    <property type="evidence" value="ECO:0007669"/>
    <property type="project" value="InterPro"/>
</dbReference>
<dbReference type="GO" id="GO:0000049">
    <property type="term" value="F:tRNA binding"/>
    <property type="evidence" value="ECO:0007669"/>
    <property type="project" value="UniProtKB-KW"/>
</dbReference>
<dbReference type="GO" id="GO:0006412">
    <property type="term" value="P:translation"/>
    <property type="evidence" value="ECO:0007669"/>
    <property type="project" value="UniProtKB-UniRule"/>
</dbReference>
<dbReference type="CDD" id="cd01433">
    <property type="entry name" value="Ribosomal_L16_L10e"/>
    <property type="match status" value="1"/>
</dbReference>
<dbReference type="FunFam" id="3.90.1170.10:FF:000001">
    <property type="entry name" value="50S ribosomal protein L16"/>
    <property type="match status" value="1"/>
</dbReference>
<dbReference type="Gene3D" id="3.90.1170.10">
    <property type="entry name" value="Ribosomal protein L10e/L16"/>
    <property type="match status" value="1"/>
</dbReference>
<dbReference type="HAMAP" id="MF_01342">
    <property type="entry name" value="Ribosomal_uL16"/>
    <property type="match status" value="1"/>
</dbReference>
<dbReference type="InterPro" id="IPR047873">
    <property type="entry name" value="Ribosomal_uL16"/>
</dbReference>
<dbReference type="InterPro" id="IPR000114">
    <property type="entry name" value="Ribosomal_uL16_bact-type"/>
</dbReference>
<dbReference type="InterPro" id="IPR020798">
    <property type="entry name" value="Ribosomal_uL16_CS"/>
</dbReference>
<dbReference type="InterPro" id="IPR016180">
    <property type="entry name" value="Ribosomal_uL16_dom"/>
</dbReference>
<dbReference type="InterPro" id="IPR036920">
    <property type="entry name" value="Ribosomal_uL16_sf"/>
</dbReference>
<dbReference type="NCBIfam" id="TIGR01164">
    <property type="entry name" value="rplP_bact"/>
    <property type="match status" value="1"/>
</dbReference>
<dbReference type="PANTHER" id="PTHR12220">
    <property type="entry name" value="50S/60S RIBOSOMAL PROTEIN L16"/>
    <property type="match status" value="1"/>
</dbReference>
<dbReference type="PANTHER" id="PTHR12220:SF13">
    <property type="entry name" value="LARGE RIBOSOMAL SUBUNIT PROTEIN UL16M"/>
    <property type="match status" value="1"/>
</dbReference>
<dbReference type="Pfam" id="PF00252">
    <property type="entry name" value="Ribosomal_L16"/>
    <property type="match status" value="1"/>
</dbReference>
<dbReference type="PRINTS" id="PR00060">
    <property type="entry name" value="RIBOSOMALL16"/>
</dbReference>
<dbReference type="SUPFAM" id="SSF54686">
    <property type="entry name" value="Ribosomal protein L16p/L10e"/>
    <property type="match status" value="1"/>
</dbReference>
<dbReference type="PROSITE" id="PS00586">
    <property type="entry name" value="RIBOSOMAL_L16_1"/>
    <property type="match status" value="1"/>
</dbReference>
<dbReference type="PROSITE" id="PS00701">
    <property type="entry name" value="RIBOSOMAL_L16_2"/>
    <property type="match status" value="1"/>
</dbReference>
<accession>B7JKC6</accession>
<name>RL16_BACC0</name>
<gene>
    <name evidence="1" type="primary">rplP</name>
    <name type="ordered locus">BCAH820_0129</name>
</gene>
<sequence length="144" mass="16172">MLMPKRVKYRREHRGKMRGRAKGGTEIAFGEFGLQAQAASWITNRQIEAARRAMTRYMKRGGKVWIKIFPSKPYTAKPLEVRMGSGKGAPEGWVAVVKPGKIMFEIAGVSEEVAREALRLAAHKLPVKCKFVKREENGGESNEN</sequence>
<proteinExistence type="inferred from homology"/>
<keyword id="KW-0687">Ribonucleoprotein</keyword>
<keyword id="KW-0689">Ribosomal protein</keyword>
<keyword id="KW-0694">RNA-binding</keyword>
<keyword id="KW-0699">rRNA-binding</keyword>
<keyword id="KW-0820">tRNA-binding</keyword>
<reference key="1">
    <citation type="submission" date="2008-10" db="EMBL/GenBank/DDBJ databases">
        <title>Genome sequence of Bacillus cereus AH820.</title>
        <authorList>
            <person name="Dodson R.J."/>
            <person name="Durkin A.S."/>
            <person name="Rosovitz M.J."/>
            <person name="Rasko D.A."/>
            <person name="Hoffmaster A."/>
            <person name="Ravel J."/>
            <person name="Sutton G."/>
        </authorList>
    </citation>
    <scope>NUCLEOTIDE SEQUENCE [LARGE SCALE GENOMIC DNA]</scope>
    <source>
        <strain>AH820</strain>
    </source>
</reference>
<feature type="chain" id="PRO_1000142922" description="Large ribosomal subunit protein uL16">
    <location>
        <begin position="1"/>
        <end position="144"/>
    </location>
</feature>
<comment type="function">
    <text evidence="1">Binds 23S rRNA and is also seen to make contacts with the A and possibly P site tRNAs.</text>
</comment>
<comment type="subunit">
    <text evidence="1">Part of the 50S ribosomal subunit.</text>
</comment>
<comment type="similarity">
    <text evidence="1">Belongs to the universal ribosomal protein uL16 family.</text>
</comment>
<protein>
    <recommendedName>
        <fullName evidence="1">Large ribosomal subunit protein uL16</fullName>
    </recommendedName>
    <alternativeName>
        <fullName evidence="2">50S ribosomal protein L16</fullName>
    </alternativeName>
</protein>
<evidence type="ECO:0000255" key="1">
    <source>
        <dbReference type="HAMAP-Rule" id="MF_01342"/>
    </source>
</evidence>
<evidence type="ECO:0000305" key="2"/>
<organism>
    <name type="scientific">Bacillus cereus (strain AH820)</name>
    <dbReference type="NCBI Taxonomy" id="405535"/>
    <lineage>
        <taxon>Bacteria</taxon>
        <taxon>Bacillati</taxon>
        <taxon>Bacillota</taxon>
        <taxon>Bacilli</taxon>
        <taxon>Bacillales</taxon>
        <taxon>Bacillaceae</taxon>
        <taxon>Bacillus</taxon>
        <taxon>Bacillus cereus group</taxon>
    </lineage>
</organism>